<accession>Q1QSZ2</accession>
<keyword id="KW-0413">Isomerase</keyword>
<keyword id="KW-1185">Reference proteome</keyword>
<keyword id="KW-0819">tRNA processing</keyword>
<organism>
    <name type="scientific">Chromohalobacter salexigens (strain ATCC BAA-138 / DSM 3043 / CIP 106854 / NCIMB 13768 / 1H11)</name>
    <dbReference type="NCBI Taxonomy" id="290398"/>
    <lineage>
        <taxon>Bacteria</taxon>
        <taxon>Pseudomonadati</taxon>
        <taxon>Pseudomonadota</taxon>
        <taxon>Gammaproteobacteria</taxon>
        <taxon>Oceanospirillales</taxon>
        <taxon>Halomonadaceae</taxon>
        <taxon>Chromohalobacter</taxon>
    </lineage>
</organism>
<proteinExistence type="inferred from homology"/>
<comment type="function">
    <text evidence="1">Responsible for synthesis of pseudouridine from uracil-55 in the psi GC loop of transfer RNAs.</text>
</comment>
<comment type="catalytic activity">
    <reaction evidence="1">
        <text>uridine(55) in tRNA = pseudouridine(55) in tRNA</text>
        <dbReference type="Rhea" id="RHEA:42532"/>
        <dbReference type="Rhea" id="RHEA-COMP:10101"/>
        <dbReference type="Rhea" id="RHEA-COMP:10102"/>
        <dbReference type="ChEBI" id="CHEBI:65314"/>
        <dbReference type="ChEBI" id="CHEBI:65315"/>
        <dbReference type="EC" id="5.4.99.25"/>
    </reaction>
</comment>
<comment type="similarity">
    <text evidence="1">Belongs to the pseudouridine synthase TruB family. Type 1 subfamily.</text>
</comment>
<reference key="1">
    <citation type="journal article" date="2011" name="Stand. Genomic Sci.">
        <title>Complete genome sequence of the halophilic and highly halotolerant Chromohalobacter salexigens type strain (1H11(T)).</title>
        <authorList>
            <person name="Copeland A."/>
            <person name="O'Connor K."/>
            <person name="Lucas S."/>
            <person name="Lapidus A."/>
            <person name="Berry K.W."/>
            <person name="Detter J.C."/>
            <person name="Del Rio T.G."/>
            <person name="Hammon N."/>
            <person name="Dalin E."/>
            <person name="Tice H."/>
            <person name="Pitluck S."/>
            <person name="Bruce D."/>
            <person name="Goodwin L."/>
            <person name="Han C."/>
            <person name="Tapia R."/>
            <person name="Saunders E."/>
            <person name="Schmutz J."/>
            <person name="Brettin T."/>
            <person name="Larimer F."/>
            <person name="Land M."/>
            <person name="Hauser L."/>
            <person name="Vargas C."/>
            <person name="Nieto J.J."/>
            <person name="Kyrpides N.C."/>
            <person name="Ivanova N."/>
            <person name="Goker M."/>
            <person name="Klenk H.P."/>
            <person name="Csonka L.N."/>
            <person name="Woyke T."/>
        </authorList>
    </citation>
    <scope>NUCLEOTIDE SEQUENCE [LARGE SCALE GENOMIC DNA]</scope>
    <source>
        <strain>ATCC BAA-138 / DSM 3043 / CIP 106854 / NCIMB 13768 / 1H11</strain>
    </source>
</reference>
<feature type="chain" id="PRO_1000149821" description="tRNA pseudouridine synthase B">
    <location>
        <begin position="1"/>
        <end position="307"/>
    </location>
</feature>
<feature type="active site" description="Nucleophile" evidence="1">
    <location>
        <position position="47"/>
    </location>
</feature>
<sequence length="307" mass="33460">MARRRRGTPIDGVLLLDKAPGVSSNRALQQVRRLYDAQKAGHTGTLDPMATGLLPVCFGEATKFSAYLLDADKTYRTWVRLGEVTDTGDAEGTVIEHHSVPALDERDIEAALAGFRGEVEQVPPMYSALKHQGRPLYELAREGKHVERAARRVTVYDMRLLSCEAEGFELEVRCSKGTYIRTLAEDIGHALGCGAHITSLRRLRSGPFEADAMHAFSALEDLDAASREARLLPVDTMLTHLPSLEVAASASRRLLHGQRAQIDTAGLAAQSTARLYRDAAFLGLVTVTECGEVAPRRLLNTASLASE</sequence>
<name>TRUB_CHRSD</name>
<dbReference type="EC" id="5.4.99.25" evidence="1"/>
<dbReference type="EMBL" id="CP000285">
    <property type="protein sequence ID" value="ABE60416.1"/>
    <property type="molecule type" value="Genomic_DNA"/>
</dbReference>
<dbReference type="RefSeq" id="WP_011508362.1">
    <property type="nucleotide sequence ID" value="NC_007963.1"/>
</dbReference>
<dbReference type="SMR" id="Q1QSZ2"/>
<dbReference type="STRING" id="290398.Csal_3072"/>
<dbReference type="GeneID" id="95335766"/>
<dbReference type="KEGG" id="csa:Csal_3072"/>
<dbReference type="eggNOG" id="COG0130">
    <property type="taxonomic scope" value="Bacteria"/>
</dbReference>
<dbReference type="HOGENOM" id="CLU_032087_0_3_6"/>
<dbReference type="OrthoDB" id="9802309at2"/>
<dbReference type="Proteomes" id="UP000000239">
    <property type="component" value="Chromosome"/>
</dbReference>
<dbReference type="GO" id="GO:0003723">
    <property type="term" value="F:RNA binding"/>
    <property type="evidence" value="ECO:0007669"/>
    <property type="project" value="InterPro"/>
</dbReference>
<dbReference type="GO" id="GO:0160148">
    <property type="term" value="F:tRNA pseudouridine(55) synthase activity"/>
    <property type="evidence" value="ECO:0007669"/>
    <property type="project" value="UniProtKB-EC"/>
</dbReference>
<dbReference type="GO" id="GO:1990481">
    <property type="term" value="P:mRNA pseudouridine synthesis"/>
    <property type="evidence" value="ECO:0007669"/>
    <property type="project" value="TreeGrafter"/>
</dbReference>
<dbReference type="GO" id="GO:0031119">
    <property type="term" value="P:tRNA pseudouridine synthesis"/>
    <property type="evidence" value="ECO:0007669"/>
    <property type="project" value="UniProtKB-UniRule"/>
</dbReference>
<dbReference type="CDD" id="cd02573">
    <property type="entry name" value="PseudoU_synth_EcTruB"/>
    <property type="match status" value="1"/>
</dbReference>
<dbReference type="CDD" id="cd21152">
    <property type="entry name" value="PUA_TruB_bacterial"/>
    <property type="match status" value="1"/>
</dbReference>
<dbReference type="FunFam" id="3.30.2350.10:FF:000011">
    <property type="entry name" value="tRNA pseudouridine synthase B"/>
    <property type="match status" value="1"/>
</dbReference>
<dbReference type="Gene3D" id="3.30.2350.10">
    <property type="entry name" value="Pseudouridine synthase"/>
    <property type="match status" value="1"/>
</dbReference>
<dbReference type="Gene3D" id="2.30.130.10">
    <property type="entry name" value="PUA domain"/>
    <property type="match status" value="1"/>
</dbReference>
<dbReference type="HAMAP" id="MF_01080">
    <property type="entry name" value="TruB_bact"/>
    <property type="match status" value="1"/>
</dbReference>
<dbReference type="InterPro" id="IPR020103">
    <property type="entry name" value="PsdUridine_synth_cat_dom_sf"/>
</dbReference>
<dbReference type="InterPro" id="IPR002501">
    <property type="entry name" value="PsdUridine_synth_N"/>
</dbReference>
<dbReference type="InterPro" id="IPR015947">
    <property type="entry name" value="PUA-like_sf"/>
</dbReference>
<dbReference type="InterPro" id="IPR036974">
    <property type="entry name" value="PUA_sf"/>
</dbReference>
<dbReference type="InterPro" id="IPR014780">
    <property type="entry name" value="tRNA_psdUridine_synth_TruB"/>
</dbReference>
<dbReference type="InterPro" id="IPR015240">
    <property type="entry name" value="tRNA_sdUridine_synth_fam1_C"/>
</dbReference>
<dbReference type="InterPro" id="IPR032819">
    <property type="entry name" value="TruB_C"/>
</dbReference>
<dbReference type="NCBIfam" id="TIGR00431">
    <property type="entry name" value="TruB"/>
    <property type="match status" value="1"/>
</dbReference>
<dbReference type="PANTHER" id="PTHR13767:SF2">
    <property type="entry name" value="PSEUDOURIDYLATE SYNTHASE TRUB1"/>
    <property type="match status" value="1"/>
</dbReference>
<dbReference type="PANTHER" id="PTHR13767">
    <property type="entry name" value="TRNA-PSEUDOURIDINE SYNTHASE"/>
    <property type="match status" value="1"/>
</dbReference>
<dbReference type="Pfam" id="PF09157">
    <property type="entry name" value="TruB-C_2"/>
    <property type="match status" value="1"/>
</dbReference>
<dbReference type="Pfam" id="PF16198">
    <property type="entry name" value="TruB_C_2"/>
    <property type="match status" value="1"/>
</dbReference>
<dbReference type="Pfam" id="PF01509">
    <property type="entry name" value="TruB_N"/>
    <property type="match status" value="1"/>
</dbReference>
<dbReference type="SUPFAM" id="SSF55120">
    <property type="entry name" value="Pseudouridine synthase"/>
    <property type="match status" value="1"/>
</dbReference>
<dbReference type="SUPFAM" id="SSF88697">
    <property type="entry name" value="PUA domain-like"/>
    <property type="match status" value="1"/>
</dbReference>
<protein>
    <recommendedName>
        <fullName evidence="1">tRNA pseudouridine synthase B</fullName>
        <ecNumber evidence="1">5.4.99.25</ecNumber>
    </recommendedName>
    <alternativeName>
        <fullName evidence="1">tRNA pseudouridine(55) synthase</fullName>
        <shortName evidence="1">Psi55 synthase</shortName>
    </alternativeName>
    <alternativeName>
        <fullName evidence="1">tRNA pseudouridylate synthase</fullName>
    </alternativeName>
    <alternativeName>
        <fullName evidence="1">tRNA-uridine isomerase</fullName>
    </alternativeName>
</protein>
<evidence type="ECO:0000255" key="1">
    <source>
        <dbReference type="HAMAP-Rule" id="MF_01080"/>
    </source>
</evidence>
<gene>
    <name evidence="1" type="primary">truB</name>
    <name type="ordered locus">Csal_3072</name>
</gene>